<evidence type="ECO:0000255" key="1"/>
<evidence type="ECO:0000269" key="2">
    <source>
    </source>
</evidence>
<evidence type="ECO:0000269" key="3">
    <source>
    </source>
</evidence>
<evidence type="ECO:0000269" key="4">
    <source>
    </source>
</evidence>
<evidence type="ECO:0000269" key="5">
    <source>
    </source>
</evidence>
<evidence type="ECO:0000269" key="6">
    <source>
    </source>
</evidence>
<evidence type="ECO:0000269" key="7">
    <source>
    </source>
</evidence>
<evidence type="ECO:0000269" key="8">
    <source>
    </source>
</evidence>
<evidence type="ECO:0000269" key="9">
    <source>
    </source>
</evidence>
<evidence type="ECO:0000269" key="10">
    <source>
    </source>
</evidence>
<evidence type="ECO:0000269" key="11">
    <source>
    </source>
</evidence>
<evidence type="ECO:0000269" key="12">
    <source>
    </source>
</evidence>
<evidence type="ECO:0000269" key="13">
    <source>
    </source>
</evidence>
<evidence type="ECO:0000269" key="14">
    <source>
    </source>
</evidence>
<evidence type="ECO:0000269" key="15">
    <source>
    </source>
</evidence>
<evidence type="ECO:0000269" key="16">
    <source>
    </source>
</evidence>
<evidence type="ECO:0000269" key="17">
    <source>
    </source>
</evidence>
<evidence type="ECO:0000269" key="18">
    <source ref="4"/>
</evidence>
<evidence type="ECO:0000303" key="19">
    <source>
    </source>
</evidence>
<evidence type="ECO:0000303" key="20">
    <source ref="2"/>
</evidence>
<evidence type="ECO:0000305" key="21"/>
<evidence type="ECO:0000305" key="22">
    <source>
    </source>
</evidence>
<evidence type="ECO:0000305" key="23">
    <source>
    </source>
</evidence>
<evidence type="ECO:0000305" key="24">
    <source>
    </source>
</evidence>
<evidence type="ECO:0000305" key="25">
    <source>
    </source>
</evidence>
<evidence type="ECO:0000305" key="26">
    <source>
    </source>
</evidence>
<evidence type="ECO:0007744" key="27">
    <source>
        <dbReference type="PDB" id="4JDW"/>
    </source>
</evidence>
<evidence type="ECO:0007744" key="28">
    <source>
    </source>
</evidence>
<evidence type="ECO:0007744" key="29">
    <source>
    </source>
</evidence>
<evidence type="ECO:0007829" key="30">
    <source>
        <dbReference type="PDB" id="1JDW"/>
    </source>
</evidence>
<dbReference type="EC" id="2.1.4.1" evidence="5 11 13 14"/>
<dbReference type="EMBL" id="S68805">
    <property type="protein sequence ID" value="AAB29892.1"/>
    <property type="molecule type" value="mRNA"/>
</dbReference>
<dbReference type="EMBL" id="X86401">
    <property type="protein sequence ID" value="CAA60153.1"/>
    <property type="molecule type" value="mRNA"/>
</dbReference>
<dbReference type="EMBL" id="AK294995">
    <property type="protein sequence ID" value="BAG58060.1"/>
    <property type="molecule type" value="mRNA"/>
</dbReference>
<dbReference type="EMBL" id="AK298350">
    <property type="protein sequence ID" value="BAG60595.1"/>
    <property type="status" value="ALT_INIT"/>
    <property type="molecule type" value="mRNA"/>
</dbReference>
<dbReference type="EMBL" id="AK223585">
    <property type="protein sequence ID" value="BAD97305.1"/>
    <property type="molecule type" value="mRNA"/>
</dbReference>
<dbReference type="EMBL" id="AC025580">
    <property type="status" value="NOT_ANNOTATED_CDS"/>
    <property type="molecule type" value="Genomic_DNA"/>
</dbReference>
<dbReference type="EMBL" id="BC004141">
    <property type="protein sequence ID" value="AAH04141.1"/>
    <property type="molecule type" value="mRNA"/>
</dbReference>
<dbReference type="CCDS" id="CCDS10122.1">
    <molecule id="P50440-1"/>
</dbReference>
<dbReference type="PIR" id="S41734">
    <property type="entry name" value="S41734"/>
</dbReference>
<dbReference type="PIR" id="S54161">
    <property type="entry name" value="S54161"/>
</dbReference>
<dbReference type="RefSeq" id="NP_001473.1">
    <molecule id="P50440-1"/>
    <property type="nucleotide sequence ID" value="NM_001482.3"/>
</dbReference>
<dbReference type="PDB" id="1JDW">
    <property type="method" value="X-ray"/>
    <property type="resolution" value="1.90 A"/>
    <property type="chains" value="A=1-423"/>
</dbReference>
<dbReference type="PDB" id="1JDX">
    <property type="method" value="X-ray"/>
    <property type="resolution" value="2.40 A"/>
    <property type="chains" value="A=38-423"/>
</dbReference>
<dbReference type="PDB" id="2JDW">
    <property type="method" value="X-ray"/>
    <property type="resolution" value="2.10 A"/>
    <property type="chains" value="A=1-423"/>
</dbReference>
<dbReference type="PDB" id="2JDX">
    <property type="method" value="X-ray"/>
    <property type="resolution" value="2.90 A"/>
    <property type="chains" value="A=38-423"/>
</dbReference>
<dbReference type="PDB" id="3JDW">
    <property type="method" value="X-ray"/>
    <property type="resolution" value="2.40 A"/>
    <property type="chains" value="A=1-423"/>
</dbReference>
<dbReference type="PDB" id="4JDW">
    <property type="method" value="X-ray"/>
    <property type="resolution" value="2.50 A"/>
    <property type="chains" value="A=1-423"/>
</dbReference>
<dbReference type="PDB" id="5JDW">
    <property type="method" value="X-ray"/>
    <property type="resolution" value="2.60 A"/>
    <property type="chains" value="A=38-423"/>
</dbReference>
<dbReference type="PDB" id="6JDW">
    <property type="method" value="X-ray"/>
    <property type="resolution" value="2.50 A"/>
    <property type="chains" value="A=38-423"/>
</dbReference>
<dbReference type="PDB" id="7JDW">
    <property type="method" value="X-ray"/>
    <property type="resolution" value="2.37 A"/>
    <property type="chains" value="A=38-423"/>
</dbReference>
<dbReference type="PDB" id="8JDW">
    <property type="method" value="X-ray"/>
    <property type="resolution" value="2.30 A"/>
    <property type="chains" value="A=38-423"/>
</dbReference>
<dbReference type="PDB" id="9JDW">
    <property type="method" value="X-ray"/>
    <property type="resolution" value="2.50 A"/>
    <property type="chains" value="A=38-423"/>
</dbReference>
<dbReference type="PDBsum" id="1JDW"/>
<dbReference type="PDBsum" id="1JDX"/>
<dbReference type="PDBsum" id="2JDW"/>
<dbReference type="PDBsum" id="2JDX"/>
<dbReference type="PDBsum" id="3JDW"/>
<dbReference type="PDBsum" id="4JDW"/>
<dbReference type="PDBsum" id="5JDW"/>
<dbReference type="PDBsum" id="6JDW"/>
<dbReference type="PDBsum" id="7JDW"/>
<dbReference type="PDBsum" id="8JDW"/>
<dbReference type="PDBsum" id="9JDW"/>
<dbReference type="SMR" id="P50440"/>
<dbReference type="BioGRID" id="108898">
    <property type="interactions" value="13"/>
</dbReference>
<dbReference type="FunCoup" id="P50440">
    <property type="interactions" value="311"/>
</dbReference>
<dbReference type="IntAct" id="P50440">
    <property type="interactions" value="27"/>
</dbReference>
<dbReference type="STRING" id="9606.ENSP00000379895"/>
<dbReference type="DrugBank" id="DB04454">
    <property type="generic name" value="Alpha-Aminobutyric Acid"/>
</dbReference>
<dbReference type="DrugBank" id="DB02068">
    <property type="generic name" value="Delta-Amino Valeric Acid"/>
</dbReference>
<dbReference type="DrugBank" id="DB02530">
    <property type="generic name" value="gamma-Aminobutyric acid"/>
</dbReference>
<dbReference type="DrugBank" id="DB00145">
    <property type="generic name" value="Glycine"/>
</dbReference>
<dbReference type="DrugBank" id="DB04185">
    <property type="generic name" value="Norvaline"/>
</dbReference>
<dbReference type="DrugBank" id="DB00129">
    <property type="generic name" value="Ornithine"/>
</dbReference>
<dbReference type="GlyGen" id="P50440">
    <property type="glycosylation" value="1 site, 1 O-linked glycan (1 site)"/>
</dbReference>
<dbReference type="iPTMnet" id="P50440"/>
<dbReference type="PhosphoSitePlus" id="P50440"/>
<dbReference type="SwissPalm" id="P50440"/>
<dbReference type="BioMuta" id="GATM"/>
<dbReference type="DMDM" id="1730201"/>
<dbReference type="REPRODUCTION-2DPAGE" id="IPI00032103"/>
<dbReference type="jPOST" id="P50440"/>
<dbReference type="MassIVE" id="P50440"/>
<dbReference type="PaxDb" id="9606-ENSP00000379895"/>
<dbReference type="PeptideAtlas" id="P50440"/>
<dbReference type="ProteomicsDB" id="56222">
    <molecule id="P50440-1"/>
</dbReference>
<dbReference type="ProteomicsDB" id="56223">
    <molecule id="P50440-2"/>
</dbReference>
<dbReference type="ProteomicsDB" id="56224">
    <molecule id="P50440-3"/>
</dbReference>
<dbReference type="Pumba" id="P50440"/>
<dbReference type="Antibodypedia" id="11803">
    <property type="antibodies" value="339 antibodies from 28 providers"/>
</dbReference>
<dbReference type="DNASU" id="2628"/>
<dbReference type="Ensembl" id="ENST00000396659.8">
    <molecule id="P50440-1"/>
    <property type="protein sequence ID" value="ENSP00000379895.3"/>
    <property type="gene ID" value="ENSG00000171766.17"/>
</dbReference>
<dbReference type="Ensembl" id="ENST00000558336.5">
    <molecule id="P50440-3"/>
    <property type="protein sequence ID" value="ENSP00000454008.1"/>
    <property type="gene ID" value="ENSG00000171766.17"/>
</dbReference>
<dbReference type="Ensembl" id="ENST00000675323.1">
    <molecule id="P50440-3"/>
    <property type="protein sequence ID" value="ENSP00000502445.1"/>
    <property type="gene ID" value="ENSG00000171766.17"/>
</dbReference>
<dbReference type="GeneID" id="2628"/>
<dbReference type="KEGG" id="hsa:2628"/>
<dbReference type="MANE-Select" id="ENST00000396659.8">
    <property type="protein sequence ID" value="ENSP00000379895.3"/>
    <property type="RefSeq nucleotide sequence ID" value="NM_001482.3"/>
    <property type="RefSeq protein sequence ID" value="NP_001473.1"/>
</dbReference>
<dbReference type="UCSC" id="uc001zvc.4">
    <molecule id="P50440-1"/>
    <property type="organism name" value="human"/>
</dbReference>
<dbReference type="AGR" id="HGNC:4175"/>
<dbReference type="CTD" id="2628"/>
<dbReference type="DisGeNET" id="2628"/>
<dbReference type="GeneCards" id="GATM"/>
<dbReference type="GeneReviews" id="GATM"/>
<dbReference type="HGNC" id="HGNC:4175">
    <property type="gene designation" value="GATM"/>
</dbReference>
<dbReference type="HPA" id="ENSG00000171766">
    <property type="expression patterns" value="Group enriched (kidney, liver, pancreas)"/>
</dbReference>
<dbReference type="MalaCards" id="GATM"/>
<dbReference type="MIM" id="134600">
    <property type="type" value="phenotype"/>
</dbReference>
<dbReference type="MIM" id="602360">
    <property type="type" value="gene"/>
</dbReference>
<dbReference type="MIM" id="612718">
    <property type="type" value="phenotype"/>
</dbReference>
<dbReference type="neXtProt" id="NX_P50440"/>
<dbReference type="OpenTargets" id="ENSG00000171766"/>
<dbReference type="Orphanet" id="35704">
    <property type="disease" value="L-Arginine:glycine amidinotransferase deficiency"/>
</dbReference>
<dbReference type="Orphanet" id="3337">
    <property type="disease" value="Primary Fanconi renotubular syndrome"/>
</dbReference>
<dbReference type="PharmGKB" id="PA28590"/>
<dbReference type="VEuPathDB" id="HostDB:ENSG00000171766"/>
<dbReference type="eggNOG" id="ENOG502QVCA">
    <property type="taxonomic scope" value="Eukaryota"/>
</dbReference>
<dbReference type="GeneTree" id="ENSGT00390000011613"/>
<dbReference type="HOGENOM" id="CLU_047415_1_0_1"/>
<dbReference type="InParanoid" id="P50440"/>
<dbReference type="OMA" id="YPIHIDA"/>
<dbReference type="OrthoDB" id="10264242at2759"/>
<dbReference type="PAN-GO" id="P50440">
    <property type="GO annotations" value="3 GO annotations based on evolutionary models"/>
</dbReference>
<dbReference type="PhylomeDB" id="P50440"/>
<dbReference type="TreeFam" id="TF300256"/>
<dbReference type="BioCyc" id="MetaCyc:HS10376-MONOMER"/>
<dbReference type="BRENDA" id="2.1.4.1">
    <property type="organism ID" value="2681"/>
</dbReference>
<dbReference type="PathwayCommons" id="P50440"/>
<dbReference type="Reactome" id="R-HSA-71288">
    <property type="pathway name" value="Creatine metabolism"/>
</dbReference>
<dbReference type="SABIO-RK" id="P50440"/>
<dbReference type="SignaLink" id="P50440"/>
<dbReference type="UniPathway" id="UPA00104">
    <property type="reaction ID" value="UER00579"/>
</dbReference>
<dbReference type="BioGRID-ORCS" id="2628">
    <property type="hits" value="7 hits in 1151 CRISPR screens"/>
</dbReference>
<dbReference type="ChiTaRS" id="GATM">
    <property type="organism name" value="human"/>
</dbReference>
<dbReference type="EvolutionaryTrace" id="P50440"/>
<dbReference type="GeneWiki" id="GATM_(gene)"/>
<dbReference type="GenomeRNAi" id="2628"/>
<dbReference type="Pharos" id="P50440">
    <property type="development level" value="Tbio"/>
</dbReference>
<dbReference type="PRO" id="PR:P50440"/>
<dbReference type="Proteomes" id="UP000005640">
    <property type="component" value="Chromosome 15"/>
</dbReference>
<dbReference type="RNAct" id="P50440">
    <property type="molecule type" value="protein"/>
</dbReference>
<dbReference type="Bgee" id="ENSG00000171766">
    <property type="expression patterns" value="Expressed in body of pancreas and 207 other cell types or tissues"/>
</dbReference>
<dbReference type="ExpressionAtlas" id="P50440">
    <property type="expression patterns" value="baseline and differential"/>
</dbReference>
<dbReference type="GO" id="GO:0070062">
    <property type="term" value="C:extracellular exosome"/>
    <property type="evidence" value="ECO:0007005"/>
    <property type="project" value="UniProtKB"/>
</dbReference>
<dbReference type="GO" id="GO:0005743">
    <property type="term" value="C:mitochondrial inner membrane"/>
    <property type="evidence" value="ECO:0007669"/>
    <property type="project" value="UniProtKB-SubCell"/>
</dbReference>
<dbReference type="GO" id="GO:0005758">
    <property type="term" value="C:mitochondrial intermembrane space"/>
    <property type="evidence" value="ECO:0000314"/>
    <property type="project" value="MGI"/>
</dbReference>
<dbReference type="GO" id="GO:0005739">
    <property type="term" value="C:mitochondrion"/>
    <property type="evidence" value="ECO:0000314"/>
    <property type="project" value="HPA"/>
</dbReference>
<dbReference type="GO" id="GO:0015067">
    <property type="term" value="F:amidinotransferase activity"/>
    <property type="evidence" value="ECO:0000314"/>
    <property type="project" value="UniProtKB"/>
</dbReference>
<dbReference type="GO" id="GO:0015068">
    <property type="term" value="F:glycine amidinotransferase activity"/>
    <property type="evidence" value="ECO:0000314"/>
    <property type="project" value="UniProtKB"/>
</dbReference>
<dbReference type="GO" id="GO:0006601">
    <property type="term" value="P:creatine biosynthetic process"/>
    <property type="evidence" value="ECO:0000314"/>
    <property type="project" value="MGI"/>
</dbReference>
<dbReference type="GO" id="GO:0006600">
    <property type="term" value="P:creatine metabolic process"/>
    <property type="evidence" value="ECO:0000315"/>
    <property type="project" value="CAFA"/>
</dbReference>
<dbReference type="GO" id="GO:0007611">
    <property type="term" value="P:learning or memory"/>
    <property type="evidence" value="ECO:0000315"/>
    <property type="project" value="CAFA"/>
</dbReference>
<dbReference type="GO" id="GO:0014889">
    <property type="term" value="P:muscle atrophy"/>
    <property type="evidence" value="ECO:0000315"/>
    <property type="project" value="CAFA"/>
</dbReference>
<dbReference type="GO" id="GO:0120162">
    <property type="term" value="P:positive regulation of cold-induced thermogenesis"/>
    <property type="evidence" value="ECO:0000250"/>
    <property type="project" value="YuBioLab"/>
</dbReference>
<dbReference type="CDD" id="cd21136">
    <property type="entry name" value="amidinotransferase_AGAT-like"/>
    <property type="match status" value="1"/>
</dbReference>
<dbReference type="DisProt" id="DP00099"/>
<dbReference type="FunFam" id="3.75.10.10:FF:000005">
    <property type="entry name" value="Glycine amidinotransferase, mitochondrial"/>
    <property type="match status" value="1"/>
</dbReference>
<dbReference type="Gene3D" id="3.75.10.10">
    <property type="entry name" value="L-arginine/glycine Amidinotransferase, Chain A"/>
    <property type="match status" value="1"/>
</dbReference>
<dbReference type="InterPro" id="IPR033195">
    <property type="entry name" value="AmidinoTrfase"/>
</dbReference>
<dbReference type="PANTHER" id="PTHR10488">
    <property type="entry name" value="GLYCINE AMIDINOTRANSFERASE, MITOCHONDRIAL"/>
    <property type="match status" value="1"/>
</dbReference>
<dbReference type="PANTHER" id="PTHR10488:SF1">
    <property type="entry name" value="GLYCINE AMIDINOTRANSFERASE, MITOCHONDRIAL"/>
    <property type="match status" value="1"/>
</dbReference>
<dbReference type="SUPFAM" id="SSF55909">
    <property type="entry name" value="Pentein"/>
    <property type="match status" value="1"/>
</dbReference>
<sequence>MLRVRCLRGGSRGAEAVHYIGSRLGRTLTGWVQRTFQSTQAATASSRNSCAADDKATEPLPKDCPVSSYNEWDPLEEVIVGRAENACVPPFTIEVKANTYEKYWPFYQKQGGHYFPKDHLKKAVAEIEEMCNILKTEGVTVRRPDPIDWSLKYKTPDFESTGLYSAMPRDILIVVGNEIIEAPMAWRSRFFEYRAYRSIIKDYFHRGAKWTTAPKPTMADELYNQDYPIHSVEDRHKLAAQGKFVTTEFEPCFDAADFIRAGRDIFAQRSQVTNYLGIEWMRRHLAPDYRVHIISFKDPNPMHIDATFNIIGPGIVLSNPDRPCHQIDLFKKAGWTIITPPTPIIPDDHPLWMSSKWLSMNVLMLDEKRVMVDANEVPIQKMFEKLGITTIKVNIRNANSLGGGFHCWTCDVRRRGTLQSYLD</sequence>
<reference key="1">
    <citation type="journal article" date="1994" name="FEBS Lett.">
        <title>The amino acid sequences of human and pig L-arginine:glycine amidinotransferase.</title>
        <authorList>
            <person name="Humm A."/>
            <person name="Huber R."/>
            <person name="Mann K."/>
        </authorList>
    </citation>
    <scope>NUCLEOTIDE SEQUENCE [MRNA] (ISOFORM 1)</scope>
    <source>
        <tissue>Kidney</tissue>
    </source>
</reference>
<reference key="2">
    <citation type="submission" date="1995-04" db="EMBL/GenBank/DDBJ databases">
        <title>Characterization of the human cDNA with partial homology with the gamma subunit of sodium potassium ATPase of rat, mouse, rabbit and sheep.</title>
        <authorList>
            <person name="Austruy E."/>
            <person name="Belley L."/>
            <person name="Millasot P."/>
            <person name="Junien C."/>
            <person name="Jeanpierre C."/>
        </authorList>
    </citation>
    <scope>NUCLEOTIDE SEQUENCE [MRNA] (ISOFORM 2)</scope>
    <source>
        <tissue>Kidney</tissue>
    </source>
</reference>
<reference key="3">
    <citation type="journal article" date="2004" name="Nat. Genet.">
        <title>Complete sequencing and characterization of 21,243 full-length human cDNAs.</title>
        <authorList>
            <person name="Ota T."/>
            <person name="Suzuki Y."/>
            <person name="Nishikawa T."/>
            <person name="Otsuki T."/>
            <person name="Sugiyama T."/>
            <person name="Irie R."/>
            <person name="Wakamatsu A."/>
            <person name="Hayashi K."/>
            <person name="Sato H."/>
            <person name="Nagai K."/>
            <person name="Kimura K."/>
            <person name="Makita H."/>
            <person name="Sekine M."/>
            <person name="Obayashi M."/>
            <person name="Nishi T."/>
            <person name="Shibahara T."/>
            <person name="Tanaka T."/>
            <person name="Ishii S."/>
            <person name="Yamamoto J."/>
            <person name="Saito K."/>
            <person name="Kawai Y."/>
            <person name="Isono Y."/>
            <person name="Nakamura Y."/>
            <person name="Nagahari K."/>
            <person name="Murakami K."/>
            <person name="Yasuda T."/>
            <person name="Iwayanagi T."/>
            <person name="Wagatsuma M."/>
            <person name="Shiratori A."/>
            <person name="Sudo H."/>
            <person name="Hosoiri T."/>
            <person name="Kaku Y."/>
            <person name="Kodaira H."/>
            <person name="Kondo H."/>
            <person name="Sugawara M."/>
            <person name="Takahashi M."/>
            <person name="Kanda K."/>
            <person name="Yokoi T."/>
            <person name="Furuya T."/>
            <person name="Kikkawa E."/>
            <person name="Omura Y."/>
            <person name="Abe K."/>
            <person name="Kamihara K."/>
            <person name="Katsuta N."/>
            <person name="Sato K."/>
            <person name="Tanikawa M."/>
            <person name="Yamazaki M."/>
            <person name="Ninomiya K."/>
            <person name="Ishibashi T."/>
            <person name="Yamashita H."/>
            <person name="Murakawa K."/>
            <person name="Fujimori K."/>
            <person name="Tanai H."/>
            <person name="Kimata M."/>
            <person name="Watanabe M."/>
            <person name="Hiraoka S."/>
            <person name="Chiba Y."/>
            <person name="Ishida S."/>
            <person name="Ono Y."/>
            <person name="Takiguchi S."/>
            <person name="Watanabe S."/>
            <person name="Yosida M."/>
            <person name="Hotuta T."/>
            <person name="Kusano J."/>
            <person name="Kanehori K."/>
            <person name="Takahashi-Fujii A."/>
            <person name="Hara H."/>
            <person name="Tanase T.-O."/>
            <person name="Nomura Y."/>
            <person name="Togiya S."/>
            <person name="Komai F."/>
            <person name="Hara R."/>
            <person name="Takeuchi K."/>
            <person name="Arita M."/>
            <person name="Imose N."/>
            <person name="Musashino K."/>
            <person name="Yuuki H."/>
            <person name="Oshima A."/>
            <person name="Sasaki N."/>
            <person name="Aotsuka S."/>
            <person name="Yoshikawa Y."/>
            <person name="Matsunawa H."/>
            <person name="Ichihara T."/>
            <person name="Shiohata N."/>
            <person name="Sano S."/>
            <person name="Moriya S."/>
            <person name="Momiyama H."/>
            <person name="Satoh N."/>
            <person name="Takami S."/>
            <person name="Terashima Y."/>
            <person name="Suzuki O."/>
            <person name="Nakagawa S."/>
            <person name="Senoh A."/>
            <person name="Mizoguchi H."/>
            <person name="Goto Y."/>
            <person name="Shimizu F."/>
            <person name="Wakebe H."/>
            <person name="Hishigaki H."/>
            <person name="Watanabe T."/>
            <person name="Sugiyama A."/>
            <person name="Takemoto M."/>
            <person name="Kawakami B."/>
            <person name="Yamazaki M."/>
            <person name="Watanabe K."/>
            <person name="Kumagai A."/>
            <person name="Itakura S."/>
            <person name="Fukuzumi Y."/>
            <person name="Fujimori Y."/>
            <person name="Komiyama M."/>
            <person name="Tashiro H."/>
            <person name="Tanigami A."/>
            <person name="Fujiwara T."/>
            <person name="Ono T."/>
            <person name="Yamada K."/>
            <person name="Fujii Y."/>
            <person name="Ozaki K."/>
            <person name="Hirao M."/>
            <person name="Ohmori Y."/>
            <person name="Kawabata A."/>
            <person name="Hikiji T."/>
            <person name="Kobatake N."/>
            <person name="Inagaki H."/>
            <person name="Ikema Y."/>
            <person name="Okamoto S."/>
            <person name="Okitani R."/>
            <person name="Kawakami T."/>
            <person name="Noguchi S."/>
            <person name="Itoh T."/>
            <person name="Shigeta K."/>
            <person name="Senba T."/>
            <person name="Matsumura K."/>
            <person name="Nakajima Y."/>
            <person name="Mizuno T."/>
            <person name="Morinaga M."/>
            <person name="Sasaki M."/>
            <person name="Togashi T."/>
            <person name="Oyama M."/>
            <person name="Hata H."/>
            <person name="Watanabe M."/>
            <person name="Komatsu T."/>
            <person name="Mizushima-Sugano J."/>
            <person name="Satoh T."/>
            <person name="Shirai Y."/>
            <person name="Takahashi Y."/>
            <person name="Nakagawa K."/>
            <person name="Okumura K."/>
            <person name="Nagase T."/>
            <person name="Nomura N."/>
            <person name="Kikuchi H."/>
            <person name="Masuho Y."/>
            <person name="Yamashita R."/>
            <person name="Nakai K."/>
            <person name="Yada T."/>
            <person name="Nakamura Y."/>
            <person name="Ohara O."/>
            <person name="Isogai T."/>
            <person name="Sugano S."/>
        </authorList>
    </citation>
    <scope>NUCLEOTIDE SEQUENCE [LARGE SCALE MRNA] (ISOFORMS 1 AND 3)</scope>
    <source>
        <tissue>Brain</tissue>
        <tissue>Kidney</tissue>
    </source>
</reference>
<reference key="4">
    <citation type="submission" date="2005-04" db="EMBL/GenBank/DDBJ databases">
        <authorList>
            <person name="Totoki Y."/>
            <person name="Toyoda A."/>
            <person name="Takeda T."/>
            <person name="Sakaki Y."/>
            <person name="Tanaka A."/>
            <person name="Yokoyama S."/>
        </authorList>
    </citation>
    <scope>NUCLEOTIDE SEQUENCE [LARGE SCALE MRNA] (ISOFORM 1)</scope>
    <scope>VARIANT HIS-110</scope>
    <source>
        <tissue>Kidney</tissue>
    </source>
</reference>
<reference key="5">
    <citation type="journal article" date="2006" name="Nature">
        <title>Analysis of the DNA sequence and duplication history of human chromosome 15.</title>
        <authorList>
            <person name="Zody M.C."/>
            <person name="Garber M."/>
            <person name="Sharpe T."/>
            <person name="Young S.K."/>
            <person name="Rowen L."/>
            <person name="O'Neill K."/>
            <person name="Whittaker C.A."/>
            <person name="Kamal M."/>
            <person name="Chang J.L."/>
            <person name="Cuomo C.A."/>
            <person name="Dewar K."/>
            <person name="FitzGerald M.G."/>
            <person name="Kodira C.D."/>
            <person name="Madan A."/>
            <person name="Qin S."/>
            <person name="Yang X."/>
            <person name="Abbasi N."/>
            <person name="Abouelleil A."/>
            <person name="Arachchi H.M."/>
            <person name="Baradarani L."/>
            <person name="Birditt B."/>
            <person name="Bloom S."/>
            <person name="Bloom T."/>
            <person name="Borowsky M.L."/>
            <person name="Burke J."/>
            <person name="Butler J."/>
            <person name="Cook A."/>
            <person name="DeArellano K."/>
            <person name="DeCaprio D."/>
            <person name="Dorris L. III"/>
            <person name="Dors M."/>
            <person name="Eichler E.E."/>
            <person name="Engels R."/>
            <person name="Fahey J."/>
            <person name="Fleetwood P."/>
            <person name="Friedman C."/>
            <person name="Gearin G."/>
            <person name="Hall J.L."/>
            <person name="Hensley G."/>
            <person name="Johnson E."/>
            <person name="Jones C."/>
            <person name="Kamat A."/>
            <person name="Kaur A."/>
            <person name="Locke D.P."/>
            <person name="Madan A."/>
            <person name="Munson G."/>
            <person name="Jaffe D.B."/>
            <person name="Lui A."/>
            <person name="Macdonald P."/>
            <person name="Mauceli E."/>
            <person name="Naylor J.W."/>
            <person name="Nesbitt R."/>
            <person name="Nicol R."/>
            <person name="O'Leary S.B."/>
            <person name="Ratcliffe A."/>
            <person name="Rounsley S."/>
            <person name="She X."/>
            <person name="Sneddon K.M.B."/>
            <person name="Stewart S."/>
            <person name="Sougnez C."/>
            <person name="Stone S.M."/>
            <person name="Topham K."/>
            <person name="Vincent D."/>
            <person name="Wang S."/>
            <person name="Zimmer A.R."/>
            <person name="Birren B.W."/>
            <person name="Hood L."/>
            <person name="Lander E.S."/>
            <person name="Nusbaum C."/>
        </authorList>
    </citation>
    <scope>NUCLEOTIDE SEQUENCE [LARGE SCALE GENOMIC DNA]</scope>
</reference>
<reference key="6">
    <citation type="journal article" date="2004" name="Genome Res.">
        <title>The status, quality, and expansion of the NIH full-length cDNA project: the Mammalian Gene Collection (MGC).</title>
        <authorList>
            <consortium name="The MGC Project Team"/>
        </authorList>
    </citation>
    <scope>NUCLEOTIDE SEQUENCE [LARGE SCALE MRNA] (ISOFORM 1)</scope>
    <source>
        <tissue>Muscle</tissue>
    </source>
</reference>
<reference key="7">
    <citation type="journal article" date="1986" name="Arch. Biochem. Biophys.">
        <title>The purification and characterization of human kidney L-arginine:glycine amidinotransferase.</title>
        <authorList>
            <person name="Gross M.D."/>
            <person name="Eggen M.A."/>
            <person name="Simon A.M."/>
            <person name="Van Pilsum J.F."/>
        </authorList>
    </citation>
    <scope>FUNCTION</scope>
    <scope>CATALYTIC ACTIVITY</scope>
    <scope>BIOPHYSICOCHEMICAL PROPERTIES</scope>
    <scope>SUBUNIT</scope>
    <scope>PATHWAY</scope>
</reference>
<reference key="8">
    <citation type="journal article" date="1997" name="Biochem. J.">
        <title>Recombinant expression and isolation of human L-arginine:glycine amidinotransferase and identification of its active-site cysteine residue.</title>
        <authorList>
            <person name="Humm A."/>
            <person name="Fritsche E."/>
            <person name="Mann K."/>
            <person name="Goehl U."/>
            <person name="Huber R."/>
        </authorList>
    </citation>
    <scope>ACTIVE SITE CYS-407</scope>
</reference>
<reference key="9">
    <citation type="journal article" date="1997" name="Biol. Chem.">
        <title>Structure and reaction mechanism of L-arginine:glycine amidinotransferase.</title>
        <authorList>
            <person name="Humm A."/>
            <person name="Fritsche E."/>
            <person name="Steinbacher S."/>
        </authorList>
    </citation>
    <scope>REVIEW</scope>
</reference>
<reference key="10">
    <citation type="journal article" date="2006" name="Circulation">
        <title>Myocardial expression of the arginine:glycine amidinotransferase gene is elevated in heart failure and normalized after recovery: potential implications for local creatine synthesis.</title>
        <authorList>
            <person name="Cullen M.E."/>
            <person name="Yuen A.H."/>
            <person name="Felkin L.E."/>
            <person name="Smolenski R.T."/>
            <person name="Hall J.L."/>
            <person name="Grindle S."/>
            <person name="Miller L.W."/>
            <person name="Birks E.J."/>
            <person name="Yacoub M.H."/>
            <person name="Barton P.J."/>
        </authorList>
    </citation>
    <scope>FUNCTION</scope>
    <scope>CATALYTIC ACTIVITY</scope>
    <scope>PATHWAY</scope>
    <scope>TISSUE SPECIFICITY</scope>
    <scope>INDUCTION</scope>
</reference>
<reference key="11">
    <citation type="journal article" date="2006" name="Placenta">
        <title>Unbalanced placental expression of imprinted genes in human intrauterine growth restriction.</title>
        <authorList>
            <person name="McMinn J."/>
            <person name="Wei M."/>
            <person name="Schupf N."/>
            <person name="Cusmai J."/>
            <person name="Johnson E.B."/>
            <person name="Smith A.C."/>
            <person name="Weksberg R."/>
            <person name="Thaker H.M."/>
            <person name="Tycko B."/>
        </authorList>
    </citation>
    <scope>TISSUE SPECIFICITY</scope>
    <scope>INDUCTION</scope>
</reference>
<reference key="12">
    <citation type="journal article" date="2006" name="Proc. Natl. Acad. Sci. U.S.A.">
        <title>Limited evolutionary conservation of imprinting in the human placenta.</title>
        <authorList>
            <person name="Monk D."/>
            <person name="Arnaud P."/>
            <person name="Apostolidou S."/>
            <person name="Hills F.A."/>
            <person name="Kelsey G."/>
            <person name="Stanier P."/>
            <person name="Feil R."/>
            <person name="Moore G.E."/>
        </authorList>
    </citation>
    <scope>TISSUE SPECIFICITY</scope>
</reference>
<reference key="13">
    <citation type="journal article" date="2009" name="Science">
        <title>Lysine acetylation targets protein complexes and co-regulates major cellular functions.</title>
        <authorList>
            <person name="Choudhary C."/>
            <person name="Kumar C."/>
            <person name="Gnad F."/>
            <person name="Nielsen M.L."/>
            <person name="Rehman M."/>
            <person name="Walther T.C."/>
            <person name="Olsen J.V."/>
            <person name="Mann M."/>
        </authorList>
    </citation>
    <scope>ACETYLATION [LARGE SCALE ANALYSIS] AT LYS-385</scope>
    <scope>IDENTIFICATION BY MASS SPECTROMETRY [LARGE SCALE ANALYSIS]</scope>
</reference>
<reference key="14">
    <citation type="journal article" date="2014" name="J. Proteomics">
        <title>An enzyme assisted RP-RPLC approach for in-depth analysis of human liver phosphoproteome.</title>
        <authorList>
            <person name="Bian Y."/>
            <person name="Song C."/>
            <person name="Cheng K."/>
            <person name="Dong M."/>
            <person name="Wang F."/>
            <person name="Huang J."/>
            <person name="Sun D."/>
            <person name="Wang L."/>
            <person name="Ye M."/>
            <person name="Zou H."/>
        </authorList>
    </citation>
    <scope>PHOSPHORYLATION [LARGE SCALE ANALYSIS] AT SER-46 AND SER-49</scope>
    <scope>IDENTIFICATION BY MASS SPECTROMETRY [LARGE SCALE ANALYSIS]</scope>
    <source>
        <tissue>Liver</tissue>
    </source>
</reference>
<reference key="15">
    <citation type="journal article" date="2015" name="Proteomics">
        <title>N-terminome analysis of the human mitochondrial proteome.</title>
        <authorList>
            <person name="Vaca Jacome A.S."/>
            <person name="Rabilloud T."/>
            <person name="Schaeffer-Reiss C."/>
            <person name="Rompais M."/>
            <person name="Ayoub D."/>
            <person name="Lane L."/>
            <person name="Bairoch A."/>
            <person name="Van Dorsselaer A."/>
            <person name="Carapito C."/>
        </authorList>
    </citation>
    <scope>IDENTIFICATION BY MASS SPECTROMETRY [LARGE SCALE ANALYSIS]</scope>
</reference>
<reference key="16">
    <citation type="journal article" date="2022" name="Sci. Rep.">
        <title>Guanidino acid hydrolysis by the human enzyme annotated as agmatinase.</title>
        <authorList>
            <person name="Sinn M."/>
            <person name="Stanoppi M."/>
            <person name="Hauth F."/>
            <person name="Fleming J.R."/>
            <person name="Funck D."/>
            <person name="Mayans O."/>
            <person name="Hartig J.S."/>
        </authorList>
    </citation>
    <scope>FUNCTION</scope>
    <scope>CATALYTIC ACTIVITY</scope>
    <scope>PATHWAY</scope>
</reference>
<reference key="17">
    <citation type="journal article" date="1997" name="EMBO J.">
        <title>Crystal structure and mechanism of human L-arginine:glycine amidinotransferase: a mitochondrial enzyme involved in creatine biosynthesis.</title>
        <authorList>
            <person name="Humm A."/>
            <person name="Fritsche E."/>
            <person name="Steinbacher S."/>
            <person name="Huber R."/>
        </authorList>
    </citation>
    <scope>X-RAY CRYSTALLOGRAPHY (1.9 ANGSTROMS) OF 38-423 IN COMPLEX WITH ARGININE</scope>
    <scope>ACTIVE SITE</scope>
    <source>
        <tissue>Kidney</tissue>
    </source>
</reference>
<reference key="18">
    <citation type="journal article" date="1997" name="Eur. J. Biochem.">
        <title>Substrate binding and catalysis by L-arginine:glycine amidinotransferase -- a mutagenesis and crystallographic study.</title>
        <authorList>
            <person name="Fritsche E."/>
            <person name="Humm A."/>
            <person name="Huber R."/>
        </authorList>
    </citation>
    <scope>X-RAY CRYSTALLOGRAPHY (2.36 ANGSTROMS) OF MUTANTS ASN-170; ASN-254 AND SER-407</scope>
    <scope>FUNCTION</scope>
    <scope>CATALYTIC ACTIVITY</scope>
    <scope>BIOPHYSICOCHEMICAL PROPERTIES</scope>
    <scope>REACTION MECHANISM</scope>
    <scope>MUTAGENESIS OF ASP-170; GLU-233; ASP-254; HIS-303; ASP-305; ARG-322; SER-355; CYS-407 AND CYS-410</scope>
    <scope>PATHWAY</scope>
</reference>
<reference key="19">
    <citation type="journal article" date="1999" name="J. Biol. Chem.">
        <title>The ligand-induced structural changes of human L-arginine:glycine amidinotransferase. A mutational and crystallographic study.</title>
        <authorList>
            <person name="Fritsche E."/>
            <person name="Humm A."/>
            <person name="Huber R."/>
        </authorList>
    </citation>
    <scope>X-RAY CRYSTALLOGRAPHY (2.5 ANGSTROMS) OF 38-423</scope>
</reference>
<reference key="20">
    <citation type="journal article" date="2001" name="Am. J. Hum. Genet.">
        <title>Arginine:glycine amidinotransferase deficiency: the third inborn error of creatine metabolism in humans.</title>
        <authorList>
            <person name="Item C.B."/>
            <person name="Stockler-Ipsiroglu S."/>
            <person name="Stromberger C."/>
            <person name="Muhl A."/>
            <person name="Alessandri M.G."/>
            <person name="Bianchi M.C."/>
            <person name="Tosetti M."/>
            <person name="Fornai F."/>
            <person name="Cioni G."/>
        </authorList>
    </citation>
    <scope>INVOLVEMENT IN CCDS3</scope>
</reference>
<reference key="21">
    <citation type="journal article" date="2010" name="Mol. Genet. Metab.">
        <title>l-arginine:glycine amidinotransferase (AGAT) deficiency: clinical presentation and response to treatment in two patients with a novel mutation.</title>
        <authorList>
            <person name="Edvardson S."/>
            <person name="Korman S.H."/>
            <person name="Livne A."/>
            <person name="Shaag A."/>
            <person name="Saada A."/>
            <person name="Nalbandian R."/>
            <person name="Allouche-Arnon H."/>
            <person name="Gomori J.M."/>
            <person name="Katz-Brull R."/>
        </authorList>
    </citation>
    <scope>INVOLVEMENT IN CCDS3</scope>
</reference>
<reference key="22">
    <citation type="journal article" date="2012" name="Mol. Genet. Metab.">
        <title>Developmental progress and creatine restoration upon long-term creatine supplementation of a patient with arginine:glycine amidinotransferase deficiency.</title>
        <authorList>
            <person name="Ndika J.D."/>
            <person name="Johnston K."/>
            <person name="Barkovich J.A."/>
            <person name="Wirt M.D."/>
            <person name="O'Neill P."/>
            <person name="Betsalel O.T."/>
            <person name="Jakobs C."/>
            <person name="Salomons G.S."/>
        </authorList>
    </citation>
    <scope>INVOLVEMENT IN CCDS3</scope>
</reference>
<reference key="23">
    <citation type="journal article" date="2013" name="Mol. Genet. Metab.">
        <title>Biochemical, molecular, and clinical diagnoses of patients with cerebral creatine deficiency syndromes.</title>
        <authorList>
            <person name="Comeaux M.S."/>
            <person name="Wang J."/>
            <person name="Wang G."/>
            <person name="Kleppe S."/>
            <person name="Zhang V.W."/>
            <person name="Schmitt E.S."/>
            <person name="Craigen W.J."/>
            <person name="Renaud D."/>
            <person name="Sun Q."/>
            <person name="Wong L.J."/>
        </authorList>
    </citation>
    <scope>VARIANTS CCDS3 GLN-413 AND TRP-413</scope>
</reference>
<reference key="24">
    <citation type="journal article" date="2013" name="Neuromuscul. Disord.">
        <title>Creatine deficiency syndrome. A treatable myopathy due to arginine-glycine amidinotransferase (AGAT) deficiency.</title>
        <authorList>
            <person name="Nouioua S."/>
            <person name="Cheillan D."/>
            <person name="Zaouidi S."/>
            <person name="Salomons G.S."/>
            <person name="Amedjout N."/>
            <person name="Kessaci F."/>
            <person name="Boulahdour N."/>
            <person name="Hamadouche T."/>
            <person name="Tazir M."/>
        </authorList>
    </citation>
    <scope>VARIANT CCDS3 SER-203</scope>
</reference>
<reference key="25">
    <citation type="journal article" date="2015" name="Mol. Genet. Metab.">
        <title>Arginine:glycine amidinotransferase (AGAT) deficiency: Clinical features and long term outcomes in 16 patients diagnosed worldwide.</title>
        <authorList>
            <person name="Stockler-Ipsiroglu S."/>
            <person name="Apatean D."/>
            <person name="Battini R."/>
            <person name="DeBrosse S."/>
            <person name="Dessoffy K."/>
            <person name="Edvardson S."/>
            <person name="Eichler F."/>
            <person name="Johnston K."/>
            <person name="Koeller D.M."/>
            <person name="Nouioua S."/>
            <person name="Tazir M."/>
            <person name="Verma A."/>
            <person name="Dowling M.D."/>
            <person name="Wierenga K.J."/>
            <person name="Wierenga A.M."/>
            <person name="Zhang V."/>
            <person name="Wong L.J."/>
        </authorList>
    </citation>
    <scope>VARIANTS CCDS3 PRO-185; SER-203 AND TRP-413</scope>
</reference>
<reference key="26">
    <citation type="journal article" date="2016" name="Hum. Mutat.">
        <title>Arginine-Glycine Amidinotransferase Deficiency and Functional Characterization of Missense Variants in GATM.</title>
        <authorList>
            <person name="DesRoches C.L."/>
            <person name="Bruun T."/>
            <person name="Wang P."/>
            <person name="Marshall C.R."/>
            <person name="Mercimek-Mahmutoglu S."/>
        </authorList>
    </citation>
    <scope>VARIANTS CCDS3 GLN-23; VAL-93; ASN-102; LEU-105; LYS-181; PRO-185; CYS-189; SER-203; THR-208; HIS-282; VAL-329; LEU-346; TRP-413; GLN-413 AND GLN-415</scope>
    <scope>CHARACTERIZATION OF VARIANTS CCDS3 GLN-23; VAL-93; ASN-102; LEU-105; LYS-181; PRO-185; CYS-189; SER-203; THR-208; HIS-282; VAL-329; LEU-346; TRP-413; GLN-413 AND GLN-415</scope>
    <scope>VARIANTS CYS-231 AND GLY-234</scope>
    <scope>CHARACTERIZATION OF VARIANTS CYS-231 AND GLY-234</scope>
    <scope>FUNCTION</scope>
    <scope>CATALYTIC ACTIVITY</scope>
</reference>
<reference key="27">
    <citation type="journal article" date="2018" name="J. Am. Soc. Nephrol.">
        <title>Glycine amidinotransferase (GATM), renal Fanconi syndrome, and kidney failure.</title>
        <authorList>
            <person name="Reichold M."/>
            <person name="Klootwijk E.D."/>
            <person name="Reinders J."/>
            <person name="Otto E.A."/>
            <person name="Milani M."/>
            <person name="Broeker C."/>
            <person name="Laing C."/>
            <person name="Wiesner J."/>
            <person name="Devi S."/>
            <person name="Zhou W."/>
            <person name="Schmitt R."/>
            <person name="Tegtmeier I."/>
            <person name="Sterner C."/>
            <person name="Doellerer H."/>
            <person name="Renner K."/>
            <person name="Oefner P.J."/>
            <person name="Dettmer K."/>
            <person name="Simbuerger J.M."/>
            <person name="Witzgall R."/>
            <person name="Stanescu H.C."/>
            <person name="Dumitriu S."/>
            <person name="Iancu D."/>
            <person name="Patel V."/>
            <person name="Mozere M."/>
            <person name="Tekman M."/>
            <person name="Jaureguiberry G."/>
            <person name="Issler N."/>
            <person name="Kesselheim A."/>
            <person name="Walsh S.B."/>
            <person name="Gale D.P."/>
            <person name="Howie A.J."/>
            <person name="Martins J.R."/>
            <person name="Hall A.M."/>
            <person name="Kasgharian M."/>
            <person name="O'Brien K."/>
            <person name="Ferreira C.R."/>
            <person name="Atwal P.S."/>
            <person name="Jain M."/>
            <person name="Hammers A."/>
            <person name="Charles-Edwards G."/>
            <person name="Choe C.U."/>
            <person name="Isbrandt D."/>
            <person name="Cebrian-Serrano A."/>
            <person name="Davies B."/>
            <person name="Sandford R.N."/>
            <person name="Pugh C."/>
            <person name="Konecki D.S."/>
            <person name="Povey S."/>
            <person name="Bockenhauer D."/>
            <person name="Lichter-Konecki U."/>
            <person name="Gahl W.A."/>
            <person name="Unwin R.J."/>
            <person name="Warth R."/>
            <person name="Kleta R."/>
        </authorList>
    </citation>
    <scope>VARIANTS FRTS1 SER-320; ALA-336; ILE-336 AND LEU-341</scope>
    <scope>INVOLVEMENT IN FRTS1</scope>
    <scope>CHARACTERIZATION OF VARIANTS FRTS1 SER-320; ALA-336; ILE-336 AND LEU-341</scope>
</reference>
<proteinExistence type="evidence at protein level"/>
<comment type="function">
    <text evidence="5 11 13 14 17 22">Transamidinase that catalyzes the transfer of the amidino group of L-arginine onto the amino moiety of acceptor metabolites such as glycine, beta-alanine, gamma-aminobutyric acid (GABA) and taurine yielding the corresponding guanidine derivatives (PubMed:16820567, PubMed:27233232, PubMed:36543883, PubMed:3800397). Catalyzes the rate-limiting step of creatine biosynthesis, namely the transfer of the amidino group from L-arginine to glycine to generate guanidinoacetate, which is then methylated by GAMT to form creatine. Provides creatine as a source for ATP generation in tissues with high energy demands, in particular skeletal muscle, heart and brain (Probable) (PubMed:27233232, PubMed:36543883, PubMed:3800397, PubMed:9266688).</text>
</comment>
<comment type="catalytic activity">
    <reaction evidence="11 13 14 17 22">
        <text>L-arginine + glycine = guanidinoacetate + L-ornithine</text>
        <dbReference type="Rhea" id="RHEA:13201"/>
        <dbReference type="ChEBI" id="CHEBI:32682"/>
        <dbReference type="ChEBI" id="CHEBI:46911"/>
        <dbReference type="ChEBI" id="CHEBI:57305"/>
        <dbReference type="ChEBI" id="CHEBI:57742"/>
        <dbReference type="EC" id="2.1.4.1"/>
    </reaction>
    <physiologicalReaction direction="left-to-right" evidence="22 23 24 25 26">
        <dbReference type="Rhea" id="RHEA:13202"/>
    </physiologicalReaction>
</comment>
<comment type="catalytic activity">
    <reaction evidence="13">
        <text>4-aminobutanoate + L-arginine = 4-guanidinobutanoate + L-ornithine</text>
        <dbReference type="Rhea" id="RHEA:75939"/>
        <dbReference type="ChEBI" id="CHEBI:32682"/>
        <dbReference type="ChEBI" id="CHEBI:46911"/>
        <dbReference type="ChEBI" id="CHEBI:57486"/>
        <dbReference type="ChEBI" id="CHEBI:59888"/>
    </reaction>
    <physiologicalReaction direction="left-to-right" evidence="24">
        <dbReference type="Rhea" id="RHEA:75940"/>
    </physiologicalReaction>
</comment>
<comment type="catalytic activity">
    <reaction evidence="13">
        <text>beta-alanine + L-arginine = 3-guanidinopropanoate + L-ornithine</text>
        <dbReference type="Rhea" id="RHEA:75943"/>
        <dbReference type="ChEBI" id="CHEBI:32682"/>
        <dbReference type="ChEBI" id="CHEBI:46911"/>
        <dbReference type="ChEBI" id="CHEBI:57593"/>
        <dbReference type="ChEBI" id="CHEBI:57966"/>
    </reaction>
    <physiologicalReaction direction="left-to-right" evidence="24">
        <dbReference type="Rhea" id="RHEA:75944"/>
    </physiologicalReaction>
</comment>
<comment type="catalytic activity">
    <reaction evidence="13">
        <text>taurine + L-arginine = taurocyamine + L-ornithine</text>
        <dbReference type="Rhea" id="RHEA:75947"/>
        <dbReference type="ChEBI" id="CHEBI:32682"/>
        <dbReference type="ChEBI" id="CHEBI:46911"/>
        <dbReference type="ChEBI" id="CHEBI:58064"/>
        <dbReference type="ChEBI" id="CHEBI:507393"/>
    </reaction>
    <physiologicalReaction direction="left-to-right" evidence="24">
        <dbReference type="Rhea" id="RHEA:75948"/>
    </physiologicalReaction>
</comment>
<comment type="biophysicochemical properties">
    <kinetics>
        <KM evidence="14 17">2 uM for L-arginine</KM>
        <KM evidence="14 17">3 uM for glycine</KM>
        <Vmax evidence="14 17">0.44 umol/min/mg enzyme</Vmax>
    </kinetics>
</comment>
<comment type="pathway">
    <text evidence="22 24 25 26">Amine and polyamine biosynthesis; creatine biosynthesis; creatine from L-arginine and glycine: step 1/2.</text>
</comment>
<comment type="subunit">
    <text evidence="14">Homodimer. There is an equilibrium between the monomeric and dimeric forms, shifted towards the side of the monomer.</text>
</comment>
<comment type="interaction">
    <interactant intactId="EBI-2552594">
        <id>P50440</id>
    </interactant>
    <interactant intactId="EBI-10173507">
        <id>Q6UY14-3</id>
        <label>ADAMTSL4</label>
    </interactant>
    <organismsDiffer>false</organismsDiffer>
    <experiments>3</experiments>
</comment>
<comment type="interaction">
    <interactant intactId="EBI-2552594">
        <id>P50440</id>
    </interactant>
    <interactant intactId="EBI-949378">
        <id>Q14457</id>
        <label>BECN1</label>
    </interactant>
    <organismsDiffer>false</organismsDiffer>
    <experiments>3</experiments>
</comment>
<comment type="interaction">
    <interactant intactId="EBI-2552594">
        <id>P50440</id>
    </interactant>
    <interactant intactId="EBI-1550310">
        <id>Q9Y6G5</id>
        <label>COMMD10</label>
    </interactant>
    <organismsDiffer>false</organismsDiffer>
    <experiments>3</experiments>
</comment>
<comment type="interaction">
    <interactant intactId="EBI-2552594">
        <id>P50440</id>
    </interactant>
    <interactant intactId="EBI-2340132">
        <id>Q9UI10</id>
        <label>EIF2B4</label>
    </interactant>
    <organismsDiffer>false</organismsDiffer>
    <experiments>3</experiments>
</comment>
<comment type="interaction">
    <interactant intactId="EBI-2552594">
        <id>P50440</id>
    </interactant>
    <interactant intactId="EBI-12353035">
        <id>Q13322-4</id>
        <label>GRB10</label>
    </interactant>
    <organismsDiffer>false</organismsDiffer>
    <experiments>3</experiments>
</comment>
<comment type="interaction">
    <interactant intactId="EBI-2552594">
        <id>P50440</id>
    </interactant>
    <interactant intactId="EBI-712105">
        <id>Q13352</id>
        <label>ITGB3BP</label>
    </interactant>
    <organismsDiffer>false</organismsDiffer>
    <experiments>3</experiments>
</comment>
<comment type="interaction">
    <interactant intactId="EBI-2552594">
        <id>P50440</id>
    </interactant>
    <interactant intactId="EBI-5278370">
        <id>Q14693</id>
        <label>LPIN1</label>
    </interactant>
    <organismsDiffer>false</organismsDiffer>
    <experiments>3</experiments>
</comment>
<comment type="interaction">
    <interactant intactId="EBI-2552594">
        <id>P50440</id>
    </interactant>
    <interactant intactId="EBI-7825200">
        <id>Q96CM3</id>
        <label>RPUSD4</label>
    </interactant>
    <organismsDiffer>false</organismsDiffer>
    <experiments>3</experiments>
</comment>
<comment type="interaction">
    <interactant intactId="EBI-2552594">
        <id>P50440</id>
    </interactant>
    <interactant intactId="EBI-7797649">
        <id>P11684</id>
        <label>SCGB1A1</label>
    </interactant>
    <organismsDiffer>false</organismsDiffer>
    <experiments>3</experiments>
</comment>
<comment type="interaction">
    <interactant intactId="EBI-2552594">
        <id>P50440</id>
    </interactant>
    <interactant intactId="EBI-1268284">
        <id>Q9P1W8</id>
        <label>SIRPG</label>
    </interactant>
    <organismsDiffer>false</organismsDiffer>
    <experiments>3</experiments>
</comment>
<comment type="interaction">
    <interactant intactId="EBI-2552594">
        <id>P50440</id>
    </interactant>
    <interactant intactId="EBI-21757569">
        <id>Q8NFB2</id>
        <label>TMEM185A</label>
    </interactant>
    <organismsDiffer>false</organismsDiffer>
    <experiments>3</experiments>
</comment>
<comment type="interaction">
    <interactant intactId="EBI-2552594">
        <id>P50440</id>
    </interactant>
    <interactant intactId="EBI-2505861">
        <id>Q13829</id>
        <label>TNFAIP1</label>
    </interactant>
    <organismsDiffer>false</organismsDiffer>
    <experiments>3</experiments>
</comment>
<comment type="interaction">
    <interactant intactId="EBI-2552594">
        <id>P50440</id>
    </interactant>
    <interactant intactId="EBI-25857007">
        <id>Q6ZMY6-2</id>
        <label>WDR88</label>
    </interactant>
    <organismsDiffer>false</organismsDiffer>
    <experiments>3</experiments>
</comment>
<comment type="subcellular location">
    <molecule>Isoform 1</molecule>
    <subcellularLocation>
        <location>Mitochondrion inner membrane</location>
        <topology>Peripheral membrane protein</topology>
        <orientation>Intermembrane side</orientation>
    </subcellularLocation>
    <text>Probably attached to the outer side of the inner membrane.</text>
</comment>
<comment type="subcellular location">
    <molecule>Isoform 2</molecule>
    <subcellularLocation>
        <location>Cytoplasm</location>
    </subcellularLocation>
</comment>
<comment type="alternative products">
    <event type="alternative splicing"/>
    <isoform>
        <id>P50440-1</id>
        <name>1</name>
        <name>Mitochondrial</name>
        <sequence type="displayed"/>
    </isoform>
    <isoform>
        <id>P50440-2</id>
        <name>2</name>
        <name>Cytoplasmic</name>
        <sequence type="described" ref="VSP_000235"/>
    </isoform>
    <isoform>
        <id>P50440-3</id>
        <name>3</name>
        <sequence type="described" ref="VSP_039871"/>
    </isoform>
</comment>
<comment type="tissue specificity">
    <text evidence="3 4 5">Expressed in brain, heart, kidney, liver, lung, salivary gland and skeletal muscle tissue, with the highest expression in kidney. Biallelically expressed in placenta and fetal tissues.</text>
</comment>
<comment type="induction">
    <text evidence="3 5">Expression is elevated in the myocardium during heart failure, and decreased in inter-uterine growth restriction (IUGR)-associated placenta.</text>
</comment>
<comment type="domain">
    <text>One chain folds into a compact single domain composed of repeating units, five beta-beta-alpha-beta modules, which surround the central active site.</text>
</comment>
<comment type="disease" evidence="2 6 7 8 9 10 11">
    <disease id="DI-01189">
        <name>Cerebral creatine deficiency syndrome 3</name>
        <acronym>CCDS3</acronym>
        <description>An autosomal recessive disorder characterized by developmental delay/regression, intellectual disability, severe disturbance of expressive and cognitive speech, and severe depletion of creatine/phosphocreatine in the brain. Most patients develop a myopathy characterized by muscle weakness and atrophy later in life.</description>
        <dbReference type="MIM" id="612718"/>
    </disease>
    <text>The disease is caused by variants affecting the gene represented in this entry.</text>
</comment>
<comment type="disease" evidence="12">
    <disease id="DI-05857">
        <name>Fanconi renotubular syndrome 1</name>
        <acronym>FRTS1</acronym>
        <description>A form of Fanconi renotubular syndrome, a disease due to a generalized dysfunction of the proximal kidney tubule resulting in decreased solute and water reabsorption. Patients have polydipsia and polyuria with phosphaturia, glycosuria and aminoaciduria. They may develop hypophosphatemic rickets or osteomalacia, acidosis and a tendency toward dehydration. Some eventually develop renal insufficiency. FRTS1 inheritance is autosomal dominant.</description>
        <dbReference type="MIM" id="134600"/>
    </disease>
    <text>The disease is caused by variants affecting the gene represented in this entry.</text>
</comment>
<comment type="similarity">
    <text evidence="21">Belongs to the amidinotransferase family.</text>
</comment>
<comment type="sequence caution" evidence="21">
    <conflict type="erroneous initiation">
        <sequence resource="EMBL-CDS" id="BAG60595"/>
    </conflict>
    <text>Extended N-terminus.</text>
</comment>
<accession>P50440</accession>
<accession>B4DH99</accession>
<accession>B4DPI3</accession>
<accession>Q53EQ4</accession>
<organism>
    <name type="scientific">Homo sapiens</name>
    <name type="common">Human</name>
    <dbReference type="NCBI Taxonomy" id="9606"/>
    <lineage>
        <taxon>Eukaryota</taxon>
        <taxon>Metazoa</taxon>
        <taxon>Chordata</taxon>
        <taxon>Craniata</taxon>
        <taxon>Vertebrata</taxon>
        <taxon>Euteleostomi</taxon>
        <taxon>Mammalia</taxon>
        <taxon>Eutheria</taxon>
        <taxon>Euarchontoglires</taxon>
        <taxon>Primates</taxon>
        <taxon>Haplorrhini</taxon>
        <taxon>Catarrhini</taxon>
        <taxon>Hominidae</taxon>
        <taxon>Homo</taxon>
    </lineage>
</organism>
<keyword id="KW-0002">3D-structure</keyword>
<keyword id="KW-0007">Acetylation</keyword>
<keyword id="KW-0025">Alternative splicing</keyword>
<keyword id="KW-0963">Cytoplasm</keyword>
<keyword id="KW-0225">Disease variant</keyword>
<keyword id="KW-0472">Membrane</keyword>
<keyword id="KW-0496">Mitochondrion</keyword>
<keyword id="KW-0999">Mitochondrion inner membrane</keyword>
<keyword id="KW-0597">Phosphoprotein</keyword>
<keyword id="KW-1267">Proteomics identification</keyword>
<keyword id="KW-1185">Reference proteome</keyword>
<keyword id="KW-0808">Transferase</keyword>
<keyword id="KW-0809">Transit peptide</keyword>
<protein>
    <recommendedName>
        <fullName>Glycine amidinotransferase, mitochondrial</fullName>
        <ecNumber evidence="5 11 13 14">2.1.4.1</ecNumber>
    </recommendedName>
    <alternativeName>
        <fullName>L-arginine:glycine amidinotransferase</fullName>
    </alternativeName>
    <alternativeName>
        <fullName>Transamidinase</fullName>
    </alternativeName>
</protein>
<gene>
    <name type="primary">GATM</name>
    <name type="synonym">AGAT</name>
</gene>
<feature type="transit peptide" description="Mitochondrion" evidence="1">
    <location>
        <begin position="1"/>
        <end position="43"/>
    </location>
</feature>
<feature type="chain" id="PRO_0000001206" description="Glycine amidinotransferase, mitochondrial">
    <location>
        <begin position="44"/>
        <end position="423"/>
    </location>
</feature>
<feature type="active site" evidence="16 27">
    <location>
        <position position="254"/>
    </location>
</feature>
<feature type="active site" evidence="16 27">
    <location>
        <position position="303"/>
    </location>
</feature>
<feature type="active site" description="Amidino-cysteine intermediate" evidence="15 16 27">
    <location>
        <position position="407"/>
    </location>
</feature>
<feature type="binding site" evidence="16 27">
    <location>
        <position position="170"/>
    </location>
    <ligand>
        <name>arginine</name>
        <dbReference type="ChEBI" id="CHEBI:32696"/>
    </ligand>
</feature>
<feature type="binding site" evidence="16 27">
    <location>
        <position position="305"/>
    </location>
    <ligand>
        <name>arginine</name>
        <dbReference type="ChEBI" id="CHEBI:32696"/>
    </ligand>
</feature>
<feature type="binding site" evidence="16 27">
    <location>
        <position position="322"/>
    </location>
    <ligand>
        <name>arginine</name>
        <dbReference type="ChEBI" id="CHEBI:32696"/>
    </ligand>
</feature>
<feature type="binding site" evidence="16 27">
    <location>
        <position position="354"/>
    </location>
    <ligand>
        <name>arginine</name>
        <dbReference type="ChEBI" id="CHEBI:32696"/>
    </ligand>
</feature>
<feature type="binding site" evidence="16 27">
    <location>
        <position position="355"/>
    </location>
    <ligand>
        <name>arginine</name>
        <dbReference type="ChEBI" id="CHEBI:32696"/>
    </ligand>
</feature>
<feature type="modified residue" description="Phosphoserine" evidence="29">
    <location>
        <position position="46"/>
    </location>
</feature>
<feature type="modified residue" description="Phosphoserine" evidence="29">
    <location>
        <position position="49"/>
    </location>
</feature>
<feature type="modified residue" description="N6-acetyllysine" evidence="28">
    <location>
        <position position="385"/>
    </location>
</feature>
<feature type="splice variant" id="VSP_000235" description="In isoform 2." evidence="20">
    <original>MLRVRCLRGGSRGAEAVHYIGSRLGRTLTGWVQRTFQ</original>
    <variation>MNILK</variation>
    <location>
        <begin position="1"/>
        <end position="37"/>
    </location>
</feature>
<feature type="splice variant" id="VSP_039871" description="In isoform 3." evidence="19">
    <original>ITTIKVNIRNANSLGGGFHCWTCDVRRRGTLQSYLD</original>
    <variation>MYNK</variation>
    <location>
        <begin position="388"/>
        <end position="423"/>
    </location>
</feature>
<feature type="sequence variant" id="VAR_076483" description="In CCDS3; uncertain significance; reduces glycine amidinotransferase activity; dbSNP:rs370155767." evidence="11">
    <original>R</original>
    <variation>Q</variation>
    <location>
        <position position="23"/>
    </location>
</feature>
<feature type="sequence variant" id="VAR_076484" description="In CCDS3; uncertain significance; reduces glycine amidinotransferase activity; dbSNP:rs34991226." evidence="11">
    <original>I</original>
    <variation>V</variation>
    <location>
        <position position="93"/>
    </location>
</feature>
<feature type="sequence variant" id="VAR_076485" description="In CCDS3; uncertain significance; reduces glycine amidinotransferase activity; dbSNP:rs376335787." evidence="11">
    <original>K</original>
    <variation>N</variation>
    <location>
        <position position="102"/>
    </location>
</feature>
<feature type="sequence variant" id="VAR_076486" description="In CCDS3; uncertain significance; loss of glycine amidinotransferase activity; dbSNP:rs147804855." evidence="11">
    <original>P</original>
    <variation>L</variation>
    <location>
        <position position="105"/>
    </location>
</feature>
<feature type="sequence variant" id="VAR_020305" description="In dbSNP:rs1288775." evidence="18">
    <original>Q</original>
    <variation>H</variation>
    <location>
        <position position="110"/>
    </location>
</feature>
<feature type="sequence variant" id="VAR_076487" description="In CCDS3; uncertain significance; loss of glycine amidinotransferase activity; dbSNP:rs376982466." evidence="11">
    <original>E</original>
    <variation>K</variation>
    <location>
        <position position="181"/>
    </location>
</feature>
<feature type="sequence variant" id="VAR_076488" description="In CCDS3; decreases glycine amidinotransferase activity; dbSNP:rs2140644920." evidence="10 11">
    <original>A</original>
    <variation>P</variation>
    <location>
        <position position="185"/>
    </location>
</feature>
<feature type="sequence variant" id="VAR_076489" description="In CCDS3; uncertain significance; loss of glycine amidinotransferase activity; dbSNP:rs377578020." evidence="11">
    <original>R</original>
    <variation>C</variation>
    <location>
        <position position="189"/>
    </location>
</feature>
<feature type="sequence variant" id="VAR_069816" description="In CCDS3; loss of glycine amidinotransferase activity; dbSNP:rs397514709." evidence="9 10 11">
    <original>Y</original>
    <variation>S</variation>
    <location>
        <position position="203"/>
    </location>
</feature>
<feature type="sequence variant" id="VAR_076490" description="In CCDS3; uncertain significance; loss of glycine amidinotransferase activity; dbSNP:rs374059924." evidence="11">
    <original>A</original>
    <variation>T</variation>
    <location>
        <position position="208"/>
    </location>
</feature>
<feature type="sequence variant" id="VAR_076491" description="Decreases glycine amidinotransferase activity; dbSNP:rs202225656." evidence="11">
    <original>S</original>
    <variation>C</variation>
    <location>
        <position position="231"/>
    </location>
</feature>
<feature type="sequence variant" id="VAR_076492" description="Decreases glycine amidinotransferase activity; dbSNP:rs146057680." evidence="11">
    <original>D</original>
    <variation>G</variation>
    <location>
        <position position="234"/>
    </location>
</feature>
<feature type="sequence variant" id="VAR_076493" description="In CCDS3; uncertain significance; decreases glycine amidinotransferase activity; dbSNP:rs371447931." evidence="11">
    <original>R</original>
    <variation>H</variation>
    <location>
        <position position="282"/>
    </location>
</feature>
<feature type="sequence variant" id="VAR_084378" description="In FRTS1; results in GATM protein aggregation; GATM deposits affect mitochondrial morphology leading to abnormal and elongated mitochondria; dbSNP:rs1889443535." evidence="12">
    <original>P</original>
    <variation>S</variation>
    <location>
        <position position="320"/>
    </location>
</feature>
<feature type="sequence variant" id="VAR_076494" description="In CCDS3; uncertain significance; decreases glycine amidinotransferase activity; dbSNP:rs373802463." evidence="11">
    <original>L</original>
    <variation>V</variation>
    <location>
        <position position="329"/>
    </location>
</feature>
<feature type="sequence variant" id="VAR_084379" description="In FRTS1; uncertain significance; results in GATM protein aggregation; GATM deposits affect mitochondrial morphology leading to abnormal and elongated mitochondria; dbSNP:rs1889422994." evidence="12">
    <original>T</original>
    <variation>A</variation>
    <location>
        <position position="336"/>
    </location>
</feature>
<feature type="sequence variant" id="VAR_084380" description="In FRTS1; uncertain significance; results in GATM protein aggregation; GATM deposits affect mitochondrial morphology and results in increased ROS production, activation of the NLRP3 inflammasome and enhanced expression of the profibrotic cytokine IL-18; dbSNP:rs1481334244." evidence="12">
    <original>T</original>
    <variation>I</variation>
    <location>
        <position position="336"/>
    </location>
</feature>
<feature type="sequence variant" id="VAR_084381" description="In FRTS1; uncertain significance; results in GATM protein aggregation; GATM deposits affect mitochondrial morphology leading to abnormal and elongated mitochondria; dbSNP:rs1889422661." evidence="12">
    <original>P</original>
    <variation>L</variation>
    <location>
        <position position="341"/>
    </location>
</feature>
<feature type="sequence variant" id="VAR_076495" description="In CCDS3; uncertain significance; decreases glycine amidinotransferase activity; dbSNP:rs142814307." evidence="11">
    <original>P</original>
    <variation>L</variation>
    <location>
        <position position="346"/>
    </location>
</feature>
<feature type="sequence variant" id="VAR_071789" description="In CCDS3; loss of glycine amidinotransferase activity; dbSNP:rs1461653218." evidence="8 11">
    <original>R</original>
    <variation>Q</variation>
    <location>
        <position position="413"/>
    </location>
</feature>
<feature type="sequence variant" id="VAR_071790" description="In CCDS3; loss of glycine amidinotransferase activity; dbSNP:rs1244824806." evidence="8 10 11">
    <original>R</original>
    <variation>W</variation>
    <location>
        <position position="413"/>
    </location>
</feature>
<feature type="sequence variant" id="VAR_076496" description="In CCDS3; benign; mild decrease of glycine amidinotransferase activity; dbSNP:rs374592247." evidence="11">
    <original>R</original>
    <variation>Q</variation>
    <location>
        <position position="415"/>
    </location>
</feature>
<feature type="mutagenesis site" description="Complete loss of activity." evidence="17">
    <original>D</original>
    <variation>N</variation>
    <location>
        <position position="170"/>
    </location>
</feature>
<feature type="mutagenesis site" description="Complete loss of activity; when associated with S-407." evidence="17">
    <original>E</original>
    <variation>K</variation>
    <location>
        <position position="233"/>
    </location>
</feature>
<feature type="mutagenesis site" description="Significantly reduced activity." evidence="17">
    <original>D</original>
    <variation>N</variation>
    <location>
        <position position="254"/>
    </location>
</feature>
<feature type="mutagenesis site" description="Complete loss of activity." evidence="17">
    <original>H</original>
    <variation>V</variation>
    <location>
        <position position="303"/>
    </location>
</feature>
<feature type="mutagenesis site" description="Complete loss of activity." evidence="17">
    <original>D</original>
    <variation>A</variation>
    <location>
        <position position="305"/>
    </location>
</feature>
<feature type="mutagenesis site" description="Significantly reduced activity." evidence="17">
    <original>R</original>
    <variation>E</variation>
    <location>
        <position position="322"/>
    </location>
</feature>
<feature type="mutagenesis site" description="Significantly reduced activity." evidence="17">
    <original>S</original>
    <variation>A</variation>
    <location>
        <position position="355"/>
    </location>
</feature>
<feature type="mutagenesis site" description="Complete loss of activity; when associated with K-233." evidence="17">
    <original>C</original>
    <variation>S</variation>
    <location>
        <position position="407"/>
    </location>
</feature>
<feature type="mutagenesis site" description="No effect on activity." evidence="17">
    <original>C</original>
    <variation>A</variation>
    <location>
        <position position="410"/>
    </location>
</feature>
<feature type="sequence conflict" description="In Ref. 3; BAG60595." evidence="21" ref="3">
    <original>N</original>
    <variation>I</variation>
    <location>
        <position position="98"/>
    </location>
</feature>
<feature type="sequence conflict" description="In Ref. 3; BAG60595." evidence="21" ref="3">
    <original>T</original>
    <variation>I</variation>
    <location>
        <position position="246"/>
    </location>
</feature>
<feature type="sequence conflict" description="In Ref. 3; BAG58060." evidence="21" ref="3">
    <original>E</original>
    <variation>G</variation>
    <location>
        <position position="384"/>
    </location>
</feature>
<feature type="sequence conflict" description="In Ref. 3; BAG60595." evidence="21" ref="3">
    <original>I</original>
    <variation>V</variation>
    <location>
        <position position="395"/>
    </location>
</feature>
<feature type="strand" evidence="30">
    <location>
        <begin position="70"/>
        <end position="73"/>
    </location>
</feature>
<feature type="strand" evidence="30">
    <location>
        <begin position="75"/>
        <end position="80"/>
    </location>
</feature>
<feature type="helix" evidence="30">
    <location>
        <begin position="93"/>
        <end position="96"/>
    </location>
</feature>
<feature type="helix" evidence="30">
    <location>
        <begin position="101"/>
        <end position="103"/>
    </location>
</feature>
<feature type="helix" evidence="30">
    <location>
        <begin position="104"/>
        <end position="110"/>
    </location>
</feature>
<feature type="strand" evidence="30">
    <location>
        <begin position="113"/>
        <end position="115"/>
    </location>
</feature>
<feature type="helix" evidence="30">
    <location>
        <begin position="117"/>
        <end position="136"/>
    </location>
</feature>
<feature type="strand" evidence="30">
    <location>
        <begin position="140"/>
        <end position="142"/>
    </location>
</feature>
<feature type="strand" evidence="30">
    <location>
        <begin position="152"/>
        <end position="154"/>
    </location>
</feature>
<feature type="strand" evidence="30">
    <location>
        <begin position="159"/>
        <end position="161"/>
    </location>
</feature>
<feature type="helix" evidence="30">
    <location>
        <begin position="168"/>
        <end position="171"/>
    </location>
</feature>
<feature type="strand" evidence="30">
    <location>
        <begin position="172"/>
        <end position="176"/>
    </location>
</feature>
<feature type="strand" evidence="30">
    <location>
        <begin position="178"/>
        <end position="181"/>
    </location>
</feature>
<feature type="helix" evidence="30">
    <location>
        <begin position="187"/>
        <end position="189"/>
    </location>
</feature>
<feature type="helix" evidence="30">
    <location>
        <begin position="192"/>
        <end position="195"/>
    </location>
</feature>
<feature type="helix" evidence="30">
    <location>
        <begin position="197"/>
        <end position="205"/>
    </location>
</feature>
<feature type="strand" evidence="30">
    <location>
        <begin position="209"/>
        <end position="212"/>
    </location>
</feature>
<feature type="helix" evidence="30">
    <location>
        <begin position="220"/>
        <end position="222"/>
    </location>
</feature>
<feature type="helix" evidence="30">
    <location>
        <begin position="232"/>
        <end position="240"/>
    </location>
</feature>
<feature type="strand" evidence="30">
    <location>
        <begin position="248"/>
        <end position="250"/>
    </location>
</feature>
<feature type="helix" evidence="30">
    <location>
        <begin position="255"/>
        <end position="257"/>
    </location>
</feature>
<feature type="strand" evidence="30">
    <location>
        <begin position="258"/>
        <end position="261"/>
    </location>
</feature>
<feature type="strand" evidence="30">
    <location>
        <begin position="264"/>
        <end position="267"/>
    </location>
</feature>
<feature type="helix" evidence="30">
    <location>
        <begin position="275"/>
        <end position="285"/>
    </location>
</feature>
<feature type="turn" evidence="30">
    <location>
        <begin position="286"/>
        <end position="288"/>
    </location>
</feature>
<feature type="strand" evidence="30">
    <location>
        <begin position="290"/>
        <end position="293"/>
    </location>
</feature>
<feature type="strand" evidence="30">
    <location>
        <begin position="296"/>
        <end position="298"/>
    </location>
</feature>
<feature type="turn" evidence="30">
    <location>
        <begin position="305"/>
        <end position="307"/>
    </location>
</feature>
<feature type="strand" evidence="30">
    <location>
        <begin position="308"/>
        <end position="312"/>
    </location>
</feature>
<feature type="strand" evidence="30">
    <location>
        <begin position="315"/>
        <end position="318"/>
    </location>
</feature>
<feature type="helix" evidence="30">
    <location>
        <begin position="327"/>
        <end position="332"/>
    </location>
</feature>
<feature type="strand" evidence="30">
    <location>
        <begin position="336"/>
        <end position="338"/>
    </location>
</feature>
<feature type="strand" evidence="30">
    <location>
        <begin position="352"/>
        <end position="354"/>
    </location>
</feature>
<feature type="helix" evidence="30">
    <location>
        <begin position="356"/>
        <end position="360"/>
    </location>
</feature>
<feature type="strand" evidence="30">
    <location>
        <begin position="363"/>
        <end position="366"/>
    </location>
</feature>
<feature type="strand" evidence="30">
    <location>
        <begin position="369"/>
        <end position="373"/>
    </location>
</feature>
<feature type="helix" evidence="30">
    <location>
        <begin position="377"/>
        <end position="385"/>
    </location>
</feature>
<feature type="strand" evidence="30">
    <location>
        <begin position="389"/>
        <end position="393"/>
    </location>
</feature>
<feature type="helix" evidence="30">
    <location>
        <begin position="396"/>
        <end position="399"/>
    </location>
</feature>
<feature type="turn" evidence="30">
    <location>
        <begin position="400"/>
        <end position="402"/>
    </location>
</feature>
<feature type="turn" evidence="30">
    <location>
        <begin position="405"/>
        <end position="408"/>
    </location>
</feature>
<feature type="strand" evidence="30">
    <location>
        <begin position="409"/>
        <end position="415"/>
    </location>
</feature>
<name>GATM_HUMAN</name>